<comment type="catalytic activity">
    <reaction>
        <text>DNA(n) + a 2'-deoxyribonucleoside 5'-triphosphate = DNA(n+1) + diphosphate</text>
        <dbReference type="Rhea" id="RHEA:22508"/>
        <dbReference type="Rhea" id="RHEA-COMP:17339"/>
        <dbReference type="Rhea" id="RHEA-COMP:17340"/>
        <dbReference type="ChEBI" id="CHEBI:33019"/>
        <dbReference type="ChEBI" id="CHEBI:61560"/>
        <dbReference type="ChEBI" id="CHEBI:173112"/>
        <dbReference type="EC" id="2.7.7.7"/>
    </reaction>
</comment>
<comment type="similarity">
    <text evidence="2">Belongs to the DNA polymerase type-B family.</text>
</comment>
<accession>Q6R7C9</accession>
<sequence>MDMEIDDVDNLWTYRSVCMPDYKDAAEIIRPEFDMTKRIFNQRKHLLGMDGHCSTGMTMNEFGTRPMVFTVSKGCYPDLPTDKDKFVGDPQGPKELYMHVYGRFDTYYLDLQNEFQDINNVMNTTHDYNIYDLLKTGARTAMVREAFAGANIHGWLGTKLVYKRPPQSSAGGCRFMVKVYIAGQKTASAYQIKNTLNATSNRFRKKVYNSCVQTYTDFLVAKNAGPIGEMRIKKGVNPGVKKGAKYDYVDVHYRDIEFSNYDTFVLSEIDGVGEDLINLATSILNNHRNNFDILTKTFIKSRLKSLAPIIGGLIGSPNDFTKFKKKMVMYIMTKEFKNCMEYYLTELRSKGIQLYHALGIKSEDVKEEYVRTFCVNMLRYQYLLVMSLKEFWVEKVRGKLYSAVMAKEKEMLTQKIGMQLRTMCFDIETNFVPHSDAEQQVTLIHCVLYDEGAHNCPIEQRTFHYKAEERSMESLKTDLTYDKVVELCKKQVRDGYDLKMKEWLTRTVEQTGMFKSKKILSLFFEKMMTESKIKIHPDSHDYDADNSEPKSVEECLAFCKKRIIEVFDICMEPGKNYFIYNFKTEKEMLLAFLKYVRDSNLTVLTHYNGDSFDLPFVINRCEKLKIDGMKEYTPATFSDGSTETKRRRFQLKLTHRHDILTIKYKKSGKVADSTHKKNAINSYLESKREKLFQADDDDDDDDEDEDDGLLDERQQDSAEDMKKKGPNVYRPMAEARNIFTLQSNFVASRDVMKMVPDQAPNVDDKILKDKTLNSSAFSFLGIRKIDHEAVSYANLCKTWKFGDLNIFVAYCAVDTLLTMKIDQTLKTGMNAVATASNVYLPIRELYGNQALVRTLAIMYSYQWYKNICSPDPSVFKNEDRFWNPEYVWKDDDFKDLKPRAGRTISNVSGVYNSFFSVLFDFNSQYPGVMISENVCVSTLLDKEDADKMSKDDYVEMTIPNVYPKVRHACEPGSEKCGMNLEVVKKKKDYGLKCKWTQEFVMCEHIAKFAKKSVMEGIAGECCKNLLAKRKHYKKLMAEAAKGGNHTEVVIYNQLQLVMKVNANSIFGILLLLDSVTGGAITHEARMQNERGSEYLKKVSGPMAMADTDSTAPIAENLPLDWQPGDDKDDVGPLNRLCRRLFPGRKRPKISEFVHKIDTMYESYGSYLNDGVPEKGIPPAWIKPANLEIEKMFIGLVFIKKKNYYALKMLPGGELATHVAGLACMKSDKTKIKGATQLVLLKMLVEGDYEGYIRYATDLFSLMVVTLRAEEASKSAVKMAVENGQLEGLDELEEKTKRDFGYRDLIPKVYYTSREKVNSIENPKTVADKMEQLRCKRYGIDFSIAATVTDVVRGIKPQVGAPLTAINNTILIREPTEEQKTIEREMDMRWMARSFRQQTREDNRLSDKKEKIKKKNAEVKPLDITDMPDRLKVDQQVHTTPFPTRIRLGVKKLNNMIDYSEKAITKERDSDFVKELFHQPELMADEEELQRATEQVVEMIENFKSFSLHFPLFWYDERYCISNILELEDLDEVWHTLPNDESCVDLWNMYKNLEYEPRYIAVKVGKMGERLQMAFFDSVEESWMEYKCTNCYIFKENVWSLDDKNLAGKIYYMDMQEYEKQTRTTPLIITSPDKKKRYLVNRGSYVRNKNNAFSFKIKNETLMNAMSQTGDVGDKYLTFKPIYGKAGVCIIGSKSAGMCKSTFIRDDGREMPATWPYKRLNNQGIKIPRQKLLKIMNDSLEIRNIHNNHNLEFSFDSKTKNLTIRVETAFDEKRIKFYDESKQEKLEIDIGTNGQTQLGSFYTSVRIENKVEKKPKEVLPEKKQSTLSHFVGMSSAPKFTQDDVVKKKRAPKRAAIDRKSGSGGKKSKITAGKTAGTMF</sequence>
<reference key="1">
    <citation type="journal article" date="2005" name="J. Gen. Virol.">
        <title>A novel class of herpesvirus with bivalve hosts.</title>
        <authorList>
            <person name="Davison A.J."/>
            <person name="Trus B.L."/>
            <person name="Cheng N."/>
            <person name="Steven A.C."/>
            <person name="Watson M.S."/>
            <person name="Cunningham C."/>
            <person name="Le Deuff R.M."/>
            <person name="Renault T."/>
        </authorList>
    </citation>
    <scope>NUCLEOTIDE SEQUENCE [LARGE SCALE GENOMIC DNA]</scope>
</reference>
<gene>
    <name type="ORF">ORF100</name>
</gene>
<organismHost>
    <name type="scientific">Magallana gigas</name>
    <name type="common">Pacific oyster</name>
    <name type="synonym">Crassostrea gigas</name>
    <dbReference type="NCBI Taxonomy" id="29159"/>
</organismHost>
<organismHost>
    <name type="scientific">Pecten maximus</name>
    <name type="common">King scallop</name>
    <name type="synonym">Pilgrim's clam</name>
    <dbReference type="NCBI Taxonomy" id="6579"/>
</organismHost>
<name>DPOL_OSHVF</name>
<organism>
    <name type="scientific">Ostreid herpesvirus 1 (isolate France)</name>
    <name type="common">OsHV-1</name>
    <name type="synonym">Pacific oyster herpesvirus</name>
    <dbReference type="NCBI Taxonomy" id="654903"/>
    <lineage>
        <taxon>Viruses</taxon>
        <taxon>Duplodnaviria</taxon>
        <taxon>Heunggongvirae</taxon>
        <taxon>Peploviricota</taxon>
        <taxon>Herviviricetes</taxon>
        <taxon>Herpesvirales</taxon>
        <taxon>Malacoherpesviridae</taxon>
        <taxon>Ostreavirus</taxon>
        <taxon>Ostreavirus ostreidmalaco1</taxon>
        <taxon>Ostreid herpesvirus 1</taxon>
    </lineage>
</organism>
<dbReference type="EC" id="2.7.7.7"/>
<dbReference type="EMBL" id="AY509253">
    <property type="protein sequence ID" value="AAS00986.1"/>
    <property type="molecule type" value="Genomic_DNA"/>
</dbReference>
<dbReference type="RefSeq" id="YP_024639.1">
    <property type="nucleotide sequence ID" value="NC_005881.2"/>
</dbReference>
<dbReference type="KEGG" id="vg:2948204"/>
<dbReference type="Proteomes" id="UP000007021">
    <property type="component" value="Segment"/>
</dbReference>
<dbReference type="GO" id="GO:0008296">
    <property type="term" value="F:3'-5'-DNA exonuclease activity"/>
    <property type="evidence" value="ECO:0007669"/>
    <property type="project" value="TreeGrafter"/>
</dbReference>
<dbReference type="GO" id="GO:0003677">
    <property type="term" value="F:DNA binding"/>
    <property type="evidence" value="ECO:0007669"/>
    <property type="project" value="UniProtKB-KW"/>
</dbReference>
<dbReference type="GO" id="GO:0003887">
    <property type="term" value="F:DNA-directed DNA polymerase activity"/>
    <property type="evidence" value="ECO:0007669"/>
    <property type="project" value="UniProtKB-KW"/>
</dbReference>
<dbReference type="GO" id="GO:0000166">
    <property type="term" value="F:nucleotide binding"/>
    <property type="evidence" value="ECO:0007669"/>
    <property type="project" value="InterPro"/>
</dbReference>
<dbReference type="GO" id="GO:0006287">
    <property type="term" value="P:base-excision repair, gap-filling"/>
    <property type="evidence" value="ECO:0007669"/>
    <property type="project" value="TreeGrafter"/>
</dbReference>
<dbReference type="GO" id="GO:0045004">
    <property type="term" value="P:DNA replication proofreading"/>
    <property type="evidence" value="ECO:0007669"/>
    <property type="project" value="TreeGrafter"/>
</dbReference>
<dbReference type="GO" id="GO:0006297">
    <property type="term" value="P:nucleotide-excision repair, DNA gap filling"/>
    <property type="evidence" value="ECO:0007669"/>
    <property type="project" value="TreeGrafter"/>
</dbReference>
<dbReference type="GO" id="GO:0039693">
    <property type="term" value="P:viral DNA genome replication"/>
    <property type="evidence" value="ECO:0007669"/>
    <property type="project" value="UniProtKB-KW"/>
</dbReference>
<dbReference type="Gene3D" id="1.10.287.690">
    <property type="entry name" value="Helix hairpin bin"/>
    <property type="match status" value="1"/>
</dbReference>
<dbReference type="Gene3D" id="3.90.1600.10">
    <property type="entry name" value="Palm domain of DNA polymerase"/>
    <property type="match status" value="1"/>
</dbReference>
<dbReference type="Gene3D" id="3.30.420.10">
    <property type="entry name" value="Ribonuclease H-like superfamily/Ribonuclease H"/>
    <property type="match status" value="1"/>
</dbReference>
<dbReference type="InterPro" id="IPR006172">
    <property type="entry name" value="DNA-dir_DNA_pol_B"/>
</dbReference>
<dbReference type="InterPro" id="IPR006133">
    <property type="entry name" value="DNA-dir_DNA_pol_B_exonuc"/>
</dbReference>
<dbReference type="InterPro" id="IPR006134">
    <property type="entry name" value="DNA-dir_DNA_pol_B_multi_dom"/>
</dbReference>
<dbReference type="InterPro" id="IPR043502">
    <property type="entry name" value="DNA/RNA_pol_sf"/>
</dbReference>
<dbReference type="InterPro" id="IPR023211">
    <property type="entry name" value="DNA_pol_palm_dom_sf"/>
</dbReference>
<dbReference type="InterPro" id="IPR050240">
    <property type="entry name" value="DNA_pol_type-B"/>
</dbReference>
<dbReference type="InterPro" id="IPR012337">
    <property type="entry name" value="RNaseH-like_sf"/>
</dbReference>
<dbReference type="InterPro" id="IPR036397">
    <property type="entry name" value="RNaseH_sf"/>
</dbReference>
<dbReference type="PANTHER" id="PTHR10322">
    <property type="entry name" value="DNA POLYMERASE CATALYTIC SUBUNIT"/>
    <property type="match status" value="1"/>
</dbReference>
<dbReference type="PANTHER" id="PTHR10322:SF23">
    <property type="entry name" value="DNA POLYMERASE DELTA CATALYTIC SUBUNIT"/>
    <property type="match status" value="1"/>
</dbReference>
<dbReference type="Pfam" id="PF00136">
    <property type="entry name" value="DNA_pol_B"/>
    <property type="match status" value="1"/>
</dbReference>
<dbReference type="Pfam" id="PF03104">
    <property type="entry name" value="DNA_pol_B_exo1"/>
    <property type="match status" value="1"/>
</dbReference>
<dbReference type="SMART" id="SM00486">
    <property type="entry name" value="POLBc"/>
    <property type="match status" value="1"/>
</dbReference>
<dbReference type="SUPFAM" id="SSF56672">
    <property type="entry name" value="DNA/RNA polymerases"/>
    <property type="match status" value="1"/>
</dbReference>
<dbReference type="SUPFAM" id="SSF53098">
    <property type="entry name" value="Ribonuclease H-like"/>
    <property type="match status" value="1"/>
</dbReference>
<evidence type="ECO:0000256" key="1">
    <source>
        <dbReference type="SAM" id="MobiDB-lite"/>
    </source>
</evidence>
<evidence type="ECO:0000305" key="2"/>
<feature type="chain" id="PRO_0000385022" description="DNA polymerase">
    <location>
        <begin position="1"/>
        <end position="1878"/>
    </location>
</feature>
<feature type="region of interest" description="Disordered" evidence="1">
    <location>
        <begin position="691"/>
        <end position="727"/>
    </location>
</feature>
<feature type="region of interest" description="Disordered" evidence="1">
    <location>
        <begin position="1839"/>
        <end position="1878"/>
    </location>
</feature>
<feature type="compositionally biased region" description="Acidic residues" evidence="1">
    <location>
        <begin position="694"/>
        <end position="709"/>
    </location>
</feature>
<feature type="compositionally biased region" description="Basic and acidic residues" evidence="1">
    <location>
        <begin position="710"/>
        <end position="723"/>
    </location>
</feature>
<feature type="compositionally biased region" description="Low complexity" evidence="1">
    <location>
        <begin position="1868"/>
        <end position="1878"/>
    </location>
</feature>
<keyword id="KW-0235">DNA replication</keyword>
<keyword id="KW-0238">DNA-binding</keyword>
<keyword id="KW-0239">DNA-directed DNA polymerase</keyword>
<keyword id="KW-0548">Nucleotidyltransferase</keyword>
<keyword id="KW-1185">Reference proteome</keyword>
<keyword id="KW-0808">Transferase</keyword>
<keyword id="KW-1194">Viral DNA replication</keyword>
<protein>
    <recommendedName>
        <fullName>DNA polymerase</fullName>
        <ecNumber>2.7.7.7</ecNumber>
    </recommendedName>
</protein>
<proteinExistence type="inferred from homology"/>